<accession>O67904</accession>
<protein>
    <recommendedName>
        <fullName>Glutamyl-tRNA(Gln) amidotransferase subunit C</fullName>
        <shortName>Glu-ADT subunit C</shortName>
        <ecNumber>6.3.5.-</ecNumber>
    </recommendedName>
</protein>
<comment type="function">
    <text evidence="1">Allows the formation of correctly charged Asn-tRNA(Asn) or Gln-tRNA(Gln) through the transamidation of misacylated Asp-tRNA(Asn) or Glu-tRNA(Gln) in organisms which lack either or both of asparaginyl-tRNA or glutaminyl-tRNA synthetases. The reaction takes place in the presence of glutamine and ATP through an activated phospho-Asp-tRNA(Asn) or phospho-Glu-tRNA(Gln) (By similarity).</text>
</comment>
<comment type="catalytic activity">
    <reaction>
        <text>L-glutamyl-tRNA(Gln) + L-glutamine + ATP + H2O = L-glutaminyl-tRNA(Gln) + L-glutamate + ADP + phosphate + H(+)</text>
        <dbReference type="Rhea" id="RHEA:17521"/>
        <dbReference type="Rhea" id="RHEA-COMP:9681"/>
        <dbReference type="Rhea" id="RHEA-COMP:9684"/>
        <dbReference type="ChEBI" id="CHEBI:15377"/>
        <dbReference type="ChEBI" id="CHEBI:15378"/>
        <dbReference type="ChEBI" id="CHEBI:29985"/>
        <dbReference type="ChEBI" id="CHEBI:30616"/>
        <dbReference type="ChEBI" id="CHEBI:43474"/>
        <dbReference type="ChEBI" id="CHEBI:58359"/>
        <dbReference type="ChEBI" id="CHEBI:78520"/>
        <dbReference type="ChEBI" id="CHEBI:78521"/>
        <dbReference type="ChEBI" id="CHEBI:456216"/>
    </reaction>
</comment>
<comment type="catalytic activity">
    <reaction>
        <text>L-aspartyl-tRNA(Asn) + L-glutamine + ATP + H2O = L-asparaginyl-tRNA(Asn) + L-glutamate + ADP + phosphate + 2 H(+)</text>
        <dbReference type="Rhea" id="RHEA:14513"/>
        <dbReference type="Rhea" id="RHEA-COMP:9674"/>
        <dbReference type="Rhea" id="RHEA-COMP:9677"/>
        <dbReference type="ChEBI" id="CHEBI:15377"/>
        <dbReference type="ChEBI" id="CHEBI:15378"/>
        <dbReference type="ChEBI" id="CHEBI:29985"/>
        <dbReference type="ChEBI" id="CHEBI:30616"/>
        <dbReference type="ChEBI" id="CHEBI:43474"/>
        <dbReference type="ChEBI" id="CHEBI:58359"/>
        <dbReference type="ChEBI" id="CHEBI:78515"/>
        <dbReference type="ChEBI" id="CHEBI:78516"/>
        <dbReference type="ChEBI" id="CHEBI:456216"/>
    </reaction>
</comment>
<comment type="subunit">
    <text evidence="1">Heterotrimer of A, B and C subunits.</text>
</comment>
<comment type="similarity">
    <text evidence="2">Belongs to the GatC family.</text>
</comment>
<sequence>MVDREWVLKIAKLARLELKEEEIEVFQKQLSDILDFIDQLKELDTENVEPYIQEFEETPMREDEPHPSLDREKALMNAPERKDGFFVVPRVVEV</sequence>
<name>GATC_AQUAE</name>
<evidence type="ECO:0000250" key="1"/>
<evidence type="ECO:0000305" key="2"/>
<evidence type="ECO:0007829" key="3">
    <source>
        <dbReference type="PDB" id="3H0L"/>
    </source>
</evidence>
<feature type="chain" id="PRO_0000105271" description="Glutamyl-tRNA(Gln) amidotransferase subunit C">
    <location>
        <begin position="1"/>
        <end position="94"/>
    </location>
</feature>
<feature type="helix" evidence="3">
    <location>
        <begin position="4"/>
        <end position="13"/>
    </location>
</feature>
<feature type="helix" evidence="3">
    <location>
        <begin position="20"/>
        <end position="36"/>
    </location>
</feature>
<feature type="turn" evidence="3">
    <location>
        <begin position="37"/>
        <end position="39"/>
    </location>
</feature>
<feature type="helix" evidence="3">
    <location>
        <begin position="40"/>
        <end position="42"/>
    </location>
</feature>
<feature type="helix" evidence="3">
    <location>
        <begin position="71"/>
        <end position="75"/>
    </location>
</feature>
<feature type="strand" evidence="3">
    <location>
        <begin position="79"/>
        <end position="82"/>
    </location>
</feature>
<feature type="strand" evidence="3">
    <location>
        <begin position="85"/>
        <end position="89"/>
    </location>
</feature>
<keyword id="KW-0002">3D-structure</keyword>
<keyword id="KW-0067">ATP-binding</keyword>
<keyword id="KW-0436">Ligase</keyword>
<keyword id="KW-0547">Nucleotide-binding</keyword>
<keyword id="KW-0648">Protein biosynthesis</keyword>
<keyword id="KW-1185">Reference proteome</keyword>
<reference key="1">
    <citation type="journal article" date="1998" name="Nature">
        <title>The complete genome of the hyperthermophilic bacterium Aquifex aeolicus.</title>
        <authorList>
            <person name="Deckert G."/>
            <person name="Warren P.V."/>
            <person name="Gaasterland T."/>
            <person name="Young W.G."/>
            <person name="Lenox A.L."/>
            <person name="Graham D.E."/>
            <person name="Overbeek R."/>
            <person name="Snead M.A."/>
            <person name="Keller M."/>
            <person name="Aujay M."/>
            <person name="Huber R."/>
            <person name="Feldman R.A."/>
            <person name="Short J.M."/>
            <person name="Olsen G.J."/>
            <person name="Swanson R.V."/>
        </authorList>
    </citation>
    <scope>NUCLEOTIDE SEQUENCE [LARGE SCALE GENOMIC DNA]</scope>
    <source>
        <strain>VF5</strain>
    </source>
</reference>
<gene>
    <name type="primary">gatC</name>
    <name type="ordered locus">aq_2149</name>
</gene>
<proteinExistence type="evidence at protein level"/>
<organism>
    <name type="scientific">Aquifex aeolicus (strain VF5)</name>
    <dbReference type="NCBI Taxonomy" id="224324"/>
    <lineage>
        <taxon>Bacteria</taxon>
        <taxon>Pseudomonadati</taxon>
        <taxon>Aquificota</taxon>
        <taxon>Aquificia</taxon>
        <taxon>Aquificales</taxon>
        <taxon>Aquificaceae</taxon>
        <taxon>Aquifex</taxon>
    </lineage>
</organism>
<dbReference type="EC" id="6.3.5.-"/>
<dbReference type="EMBL" id="AE000657">
    <property type="protein sequence ID" value="AAC07874.1"/>
    <property type="molecule type" value="Genomic_DNA"/>
</dbReference>
<dbReference type="PIR" id="D70484">
    <property type="entry name" value="D70484"/>
</dbReference>
<dbReference type="RefSeq" id="NP_214473.1">
    <property type="nucleotide sequence ID" value="NC_000918.1"/>
</dbReference>
<dbReference type="RefSeq" id="WP_010881409.1">
    <property type="nucleotide sequence ID" value="NC_000918.1"/>
</dbReference>
<dbReference type="PDB" id="3H0L">
    <property type="method" value="X-ray"/>
    <property type="resolution" value="2.30 A"/>
    <property type="chains" value="C/F/I/L/O/R/U/X=1-94"/>
</dbReference>
<dbReference type="PDB" id="3H0M">
    <property type="method" value="X-ray"/>
    <property type="resolution" value="2.80 A"/>
    <property type="chains" value="C/F/I/L/O/R/U/X=1-94"/>
</dbReference>
<dbReference type="PDB" id="3H0R">
    <property type="method" value="X-ray"/>
    <property type="resolution" value="3.00 A"/>
    <property type="chains" value="C/F/I/L/O/R/U/X=1-94"/>
</dbReference>
<dbReference type="PDBsum" id="3H0L"/>
<dbReference type="PDBsum" id="3H0M"/>
<dbReference type="PDBsum" id="3H0R"/>
<dbReference type="SMR" id="O67904"/>
<dbReference type="STRING" id="224324.gene:10352819"/>
<dbReference type="EnsemblBacteria" id="AAC07874">
    <property type="protein sequence ID" value="AAC07874"/>
    <property type="gene ID" value="AAC07874"/>
</dbReference>
<dbReference type="KEGG" id="aae:aq_2147a"/>
<dbReference type="PATRIC" id="fig|224324.8.peg.1661"/>
<dbReference type="eggNOG" id="COG0721">
    <property type="taxonomic scope" value="Bacteria"/>
</dbReference>
<dbReference type="HOGENOM" id="CLU_105899_6_1_0"/>
<dbReference type="InParanoid" id="O67904"/>
<dbReference type="OrthoDB" id="9813938at2"/>
<dbReference type="EvolutionaryTrace" id="O67904"/>
<dbReference type="Proteomes" id="UP000000798">
    <property type="component" value="Chromosome"/>
</dbReference>
<dbReference type="GO" id="GO:0050566">
    <property type="term" value="F:asparaginyl-tRNA synthase (glutamine-hydrolyzing) activity"/>
    <property type="evidence" value="ECO:0007669"/>
    <property type="project" value="RHEA"/>
</dbReference>
<dbReference type="GO" id="GO:0005524">
    <property type="term" value="F:ATP binding"/>
    <property type="evidence" value="ECO:0007669"/>
    <property type="project" value="UniProtKB-KW"/>
</dbReference>
<dbReference type="GO" id="GO:0050567">
    <property type="term" value="F:glutaminyl-tRNA synthase (glutamine-hydrolyzing) activity"/>
    <property type="evidence" value="ECO:0007669"/>
    <property type="project" value="UniProtKB-UniRule"/>
</dbReference>
<dbReference type="GO" id="GO:0070681">
    <property type="term" value="P:glutaminyl-tRNAGln biosynthesis via transamidation"/>
    <property type="evidence" value="ECO:0000318"/>
    <property type="project" value="GO_Central"/>
</dbReference>
<dbReference type="GO" id="GO:0006450">
    <property type="term" value="P:regulation of translational fidelity"/>
    <property type="evidence" value="ECO:0007669"/>
    <property type="project" value="InterPro"/>
</dbReference>
<dbReference type="GO" id="GO:0006412">
    <property type="term" value="P:translation"/>
    <property type="evidence" value="ECO:0007669"/>
    <property type="project" value="UniProtKB-UniRule"/>
</dbReference>
<dbReference type="Gene3D" id="1.10.20.60">
    <property type="entry name" value="Glu-tRNAGln amidotransferase C subunit, N-terminal domain"/>
    <property type="match status" value="1"/>
</dbReference>
<dbReference type="HAMAP" id="MF_00122">
    <property type="entry name" value="GatC"/>
    <property type="match status" value="1"/>
</dbReference>
<dbReference type="InterPro" id="IPR036113">
    <property type="entry name" value="Asp/Glu-ADT_sf_sub_c"/>
</dbReference>
<dbReference type="InterPro" id="IPR003837">
    <property type="entry name" value="GatC"/>
</dbReference>
<dbReference type="NCBIfam" id="TIGR00135">
    <property type="entry name" value="gatC"/>
    <property type="match status" value="1"/>
</dbReference>
<dbReference type="PANTHER" id="PTHR15004">
    <property type="entry name" value="GLUTAMYL-TRNA(GLN) AMIDOTRANSFERASE SUBUNIT C, MITOCHONDRIAL"/>
    <property type="match status" value="1"/>
</dbReference>
<dbReference type="PANTHER" id="PTHR15004:SF0">
    <property type="entry name" value="GLUTAMYL-TRNA(GLN) AMIDOTRANSFERASE SUBUNIT C, MITOCHONDRIAL"/>
    <property type="match status" value="1"/>
</dbReference>
<dbReference type="Pfam" id="PF02686">
    <property type="entry name" value="GatC"/>
    <property type="match status" value="1"/>
</dbReference>
<dbReference type="SUPFAM" id="SSF141000">
    <property type="entry name" value="Glu-tRNAGln amidotransferase C subunit"/>
    <property type="match status" value="1"/>
</dbReference>